<evidence type="ECO:0000255" key="1">
    <source>
        <dbReference type="HAMAP-Rule" id="MF_01237"/>
    </source>
</evidence>
<feature type="chain" id="PRO_1000165003" description="N-acetylneuraminate lyase">
    <location>
        <begin position="1"/>
        <end position="297"/>
    </location>
</feature>
<feature type="active site" description="Proton donor" evidence="1">
    <location>
        <position position="137"/>
    </location>
</feature>
<feature type="active site" description="Schiff-base intermediate with substrate" evidence="1">
    <location>
        <position position="165"/>
    </location>
</feature>
<feature type="binding site" evidence="1">
    <location>
        <position position="47"/>
    </location>
    <ligand>
        <name>aceneuramate</name>
        <dbReference type="ChEBI" id="CHEBI:173083"/>
    </ligand>
</feature>
<feature type="binding site" evidence="1">
    <location>
        <position position="48"/>
    </location>
    <ligand>
        <name>aceneuramate</name>
        <dbReference type="ChEBI" id="CHEBI:173083"/>
    </ligand>
</feature>
<feature type="binding site" evidence="1">
    <location>
        <position position="167"/>
    </location>
    <ligand>
        <name>aceneuramate</name>
        <dbReference type="ChEBI" id="CHEBI:173083"/>
    </ligand>
</feature>
<feature type="binding site" evidence="1">
    <location>
        <position position="189"/>
    </location>
    <ligand>
        <name>aceneuramate</name>
        <dbReference type="ChEBI" id="CHEBI:173083"/>
    </ligand>
</feature>
<feature type="binding site" evidence="1">
    <location>
        <position position="191"/>
    </location>
    <ligand>
        <name>aceneuramate</name>
        <dbReference type="ChEBI" id="CHEBI:173083"/>
    </ligand>
</feature>
<feature type="binding site" evidence="1">
    <location>
        <position position="192"/>
    </location>
    <ligand>
        <name>aceneuramate</name>
        <dbReference type="ChEBI" id="CHEBI:173083"/>
    </ligand>
</feature>
<feature type="binding site" evidence="1">
    <location>
        <position position="208"/>
    </location>
    <ligand>
        <name>aceneuramate</name>
        <dbReference type="ChEBI" id="CHEBI:173083"/>
    </ligand>
</feature>
<accession>B7UJV8</accession>
<comment type="function">
    <text evidence="1">Catalyzes the reversible aldol cleavage of N-acetylneuraminic acid (sialic acid; Neu5Ac) to form pyruvate and N-acetylmannosamine (ManNAc) via a Schiff base intermediate.</text>
</comment>
<comment type="catalytic activity">
    <reaction evidence="1">
        <text>aceneuramate = aldehydo-N-acetyl-D-mannosamine + pyruvate</text>
        <dbReference type="Rhea" id="RHEA:23296"/>
        <dbReference type="ChEBI" id="CHEBI:15361"/>
        <dbReference type="ChEBI" id="CHEBI:17122"/>
        <dbReference type="ChEBI" id="CHEBI:173083"/>
        <dbReference type="EC" id="4.1.3.3"/>
    </reaction>
</comment>
<comment type="pathway">
    <text evidence="1">Amino-sugar metabolism; N-acetylneuraminate degradation; D-fructose 6-phosphate from N-acetylneuraminate: step 1/5.</text>
</comment>
<comment type="subunit">
    <text evidence="1">Homotetramer.</text>
</comment>
<comment type="subcellular location">
    <subcellularLocation>
        <location evidence="1">Cytoplasm</location>
    </subcellularLocation>
</comment>
<comment type="similarity">
    <text evidence="1">Belongs to the DapA family. NanA subfamily.</text>
</comment>
<name>NANA_ECO27</name>
<proteinExistence type="inferred from homology"/>
<reference key="1">
    <citation type="journal article" date="2009" name="J. Bacteriol.">
        <title>Complete genome sequence and comparative genome analysis of enteropathogenic Escherichia coli O127:H6 strain E2348/69.</title>
        <authorList>
            <person name="Iguchi A."/>
            <person name="Thomson N.R."/>
            <person name="Ogura Y."/>
            <person name="Saunders D."/>
            <person name="Ooka T."/>
            <person name="Henderson I.R."/>
            <person name="Harris D."/>
            <person name="Asadulghani M."/>
            <person name="Kurokawa K."/>
            <person name="Dean P."/>
            <person name="Kenny B."/>
            <person name="Quail M.A."/>
            <person name="Thurston S."/>
            <person name="Dougan G."/>
            <person name="Hayashi T."/>
            <person name="Parkhill J."/>
            <person name="Frankel G."/>
        </authorList>
    </citation>
    <scope>NUCLEOTIDE SEQUENCE [LARGE SCALE GENOMIC DNA]</scope>
    <source>
        <strain>E2348/69 / EPEC</strain>
    </source>
</reference>
<keyword id="KW-0119">Carbohydrate metabolism</keyword>
<keyword id="KW-0963">Cytoplasm</keyword>
<keyword id="KW-0456">Lyase</keyword>
<keyword id="KW-1185">Reference proteome</keyword>
<keyword id="KW-0704">Schiff base</keyword>
<dbReference type="EC" id="4.1.3.3" evidence="1"/>
<dbReference type="EMBL" id="FM180568">
    <property type="protein sequence ID" value="CAS11045.1"/>
    <property type="molecule type" value="Genomic_DNA"/>
</dbReference>
<dbReference type="RefSeq" id="WP_000224714.1">
    <property type="nucleotide sequence ID" value="NC_011601.1"/>
</dbReference>
<dbReference type="SMR" id="B7UJV8"/>
<dbReference type="GeneID" id="93778761"/>
<dbReference type="KEGG" id="ecg:E2348C_3497"/>
<dbReference type="HOGENOM" id="CLU_049343_6_0_6"/>
<dbReference type="UniPathway" id="UPA00629">
    <property type="reaction ID" value="UER00680"/>
</dbReference>
<dbReference type="Proteomes" id="UP000008205">
    <property type="component" value="Chromosome"/>
</dbReference>
<dbReference type="GO" id="GO:0005829">
    <property type="term" value="C:cytosol"/>
    <property type="evidence" value="ECO:0007669"/>
    <property type="project" value="TreeGrafter"/>
</dbReference>
<dbReference type="GO" id="GO:0008747">
    <property type="term" value="F:N-acetylneuraminate lyase activity"/>
    <property type="evidence" value="ECO:0007669"/>
    <property type="project" value="UniProtKB-UniRule"/>
</dbReference>
<dbReference type="GO" id="GO:0005975">
    <property type="term" value="P:carbohydrate metabolic process"/>
    <property type="evidence" value="ECO:0007669"/>
    <property type="project" value="UniProtKB-UniRule"/>
</dbReference>
<dbReference type="GO" id="GO:0019262">
    <property type="term" value="P:N-acetylneuraminate catabolic process"/>
    <property type="evidence" value="ECO:0007669"/>
    <property type="project" value="UniProtKB-UniRule"/>
</dbReference>
<dbReference type="CDD" id="cd00954">
    <property type="entry name" value="NAL"/>
    <property type="match status" value="1"/>
</dbReference>
<dbReference type="FunFam" id="3.20.20.70:FF:000039">
    <property type="entry name" value="N-acetylneuraminate lyase"/>
    <property type="match status" value="1"/>
</dbReference>
<dbReference type="Gene3D" id="3.20.20.70">
    <property type="entry name" value="Aldolase class I"/>
    <property type="match status" value="1"/>
</dbReference>
<dbReference type="HAMAP" id="MF_01237">
    <property type="entry name" value="N_acetylneuram_lyase"/>
    <property type="match status" value="1"/>
</dbReference>
<dbReference type="InterPro" id="IPR013785">
    <property type="entry name" value="Aldolase_TIM"/>
</dbReference>
<dbReference type="InterPro" id="IPR002220">
    <property type="entry name" value="DapA-like"/>
</dbReference>
<dbReference type="InterPro" id="IPR005264">
    <property type="entry name" value="NanA"/>
</dbReference>
<dbReference type="InterPro" id="IPR020625">
    <property type="entry name" value="Schiff_base-form_aldolases_AS"/>
</dbReference>
<dbReference type="InterPro" id="IPR020624">
    <property type="entry name" value="Schiff_base-form_aldolases_CS"/>
</dbReference>
<dbReference type="NCBIfam" id="TIGR00683">
    <property type="entry name" value="nanA"/>
    <property type="match status" value="1"/>
</dbReference>
<dbReference type="NCBIfam" id="NF003164">
    <property type="entry name" value="PRK04147.1"/>
    <property type="match status" value="1"/>
</dbReference>
<dbReference type="PANTHER" id="PTHR42849">
    <property type="entry name" value="N-ACETYLNEURAMINATE LYASE"/>
    <property type="match status" value="1"/>
</dbReference>
<dbReference type="PANTHER" id="PTHR42849:SF1">
    <property type="entry name" value="N-ACETYLNEURAMINATE LYASE"/>
    <property type="match status" value="1"/>
</dbReference>
<dbReference type="Pfam" id="PF00701">
    <property type="entry name" value="DHDPS"/>
    <property type="match status" value="1"/>
</dbReference>
<dbReference type="PIRSF" id="PIRSF001365">
    <property type="entry name" value="DHDPS"/>
    <property type="match status" value="1"/>
</dbReference>
<dbReference type="PRINTS" id="PR00146">
    <property type="entry name" value="DHPICSNTHASE"/>
</dbReference>
<dbReference type="SMART" id="SM01130">
    <property type="entry name" value="DHDPS"/>
    <property type="match status" value="1"/>
</dbReference>
<dbReference type="SUPFAM" id="SSF51569">
    <property type="entry name" value="Aldolase"/>
    <property type="match status" value="1"/>
</dbReference>
<dbReference type="PROSITE" id="PS00665">
    <property type="entry name" value="DHDPS_1"/>
    <property type="match status" value="1"/>
</dbReference>
<dbReference type="PROSITE" id="PS00666">
    <property type="entry name" value="DHDPS_2"/>
    <property type="match status" value="1"/>
</dbReference>
<gene>
    <name evidence="1" type="primary">nanA</name>
    <name type="ordered locus">E2348C_3497</name>
</gene>
<organism>
    <name type="scientific">Escherichia coli O127:H6 (strain E2348/69 / EPEC)</name>
    <dbReference type="NCBI Taxonomy" id="574521"/>
    <lineage>
        <taxon>Bacteria</taxon>
        <taxon>Pseudomonadati</taxon>
        <taxon>Pseudomonadota</taxon>
        <taxon>Gammaproteobacteria</taxon>
        <taxon>Enterobacterales</taxon>
        <taxon>Enterobacteriaceae</taxon>
        <taxon>Escherichia</taxon>
    </lineage>
</organism>
<sequence>MATNLRGVMAALLTPFDQQQALDKASLRRLVQFNIQQGIDGLYVGGSTGEAFVQSLSEREQVLEIVAEEAKGKIKLIAHVGCVSTAESQQLAASAKRYGFDAVSAVTPFYYPFSFEEHCDHYRAIIDSADGLPMVVYNIPALSGVKLTLDQINTLVTLPGVGALKQTSGDLYQMEQIRREHPDLVLYNGYDEIFASGLLAGADGGIGSTYNIMGWRYQGIVKALKEGDIQTAQKLQTECNKVIDLLIKTGVFRGLKTVLHYMDVVSVPLCRKPFGPVDEKYLPELKALAQQLMQERG</sequence>
<protein>
    <recommendedName>
        <fullName evidence="1">N-acetylneuraminate lyase</fullName>
        <shortName evidence="1">NAL</shortName>
        <shortName evidence="1">Neu5Ac lyase</shortName>
        <ecNumber evidence="1">4.1.3.3</ecNumber>
    </recommendedName>
    <alternativeName>
        <fullName evidence="1">N-acetylneuraminate pyruvate-lyase</fullName>
    </alternativeName>
    <alternativeName>
        <fullName evidence="1">N-acetylneuraminic acid aldolase</fullName>
    </alternativeName>
    <alternativeName>
        <fullName evidence="1">Sialate lyase</fullName>
    </alternativeName>
    <alternativeName>
        <fullName evidence="1">Sialic acid aldolase</fullName>
    </alternativeName>
    <alternativeName>
        <fullName evidence="1">Sialic acid lyase</fullName>
    </alternativeName>
</protein>